<evidence type="ECO:0000250" key="1">
    <source>
        <dbReference type="UniProtKB" id="P04798"/>
    </source>
</evidence>
<evidence type="ECO:0000255" key="2"/>
<evidence type="ECO:0000255" key="3">
    <source>
        <dbReference type="PROSITE-ProRule" id="PRU00498"/>
    </source>
</evidence>
<evidence type="ECO:0000269" key="4">
    <source>
    </source>
</evidence>
<evidence type="ECO:0000269" key="5">
    <source>
    </source>
</evidence>
<evidence type="ECO:0000303" key="6">
    <source>
    </source>
</evidence>
<evidence type="ECO:0000305" key="7"/>
<evidence type="ECO:0000305" key="8">
    <source>
    </source>
</evidence>
<evidence type="ECO:0000305" key="9">
    <source>
    </source>
</evidence>
<name>PYID_PYRGI</name>
<dbReference type="EC" id="1.-.-.-" evidence="8"/>
<dbReference type="EMBL" id="MK801691">
    <property type="protein sequence ID" value="QCS37517.1"/>
    <property type="molecule type" value="Genomic_DNA"/>
</dbReference>
<dbReference type="SMR" id="A0A4P8W744"/>
<dbReference type="GlyCosmos" id="A0A4P8W744">
    <property type="glycosylation" value="2 sites, No reported glycans"/>
</dbReference>
<dbReference type="OrthoDB" id="1844152at2759"/>
<dbReference type="Proteomes" id="UP000515153">
    <property type="component" value="Unplaced"/>
</dbReference>
<dbReference type="GO" id="GO:0016020">
    <property type="term" value="C:membrane"/>
    <property type="evidence" value="ECO:0007669"/>
    <property type="project" value="UniProtKB-SubCell"/>
</dbReference>
<dbReference type="GO" id="GO:0020037">
    <property type="term" value="F:heme binding"/>
    <property type="evidence" value="ECO:0007669"/>
    <property type="project" value="InterPro"/>
</dbReference>
<dbReference type="GO" id="GO:0005506">
    <property type="term" value="F:iron ion binding"/>
    <property type="evidence" value="ECO:0007669"/>
    <property type="project" value="InterPro"/>
</dbReference>
<dbReference type="GO" id="GO:0004497">
    <property type="term" value="F:monooxygenase activity"/>
    <property type="evidence" value="ECO:0007669"/>
    <property type="project" value="UniProtKB-KW"/>
</dbReference>
<dbReference type="GO" id="GO:0016705">
    <property type="term" value="F:oxidoreductase activity, acting on paired donors, with incorporation or reduction of molecular oxygen"/>
    <property type="evidence" value="ECO:0007669"/>
    <property type="project" value="InterPro"/>
</dbReference>
<dbReference type="GO" id="GO:0019748">
    <property type="term" value="P:secondary metabolic process"/>
    <property type="evidence" value="ECO:0007669"/>
    <property type="project" value="UniProtKB-ARBA"/>
</dbReference>
<dbReference type="CDD" id="cd11041">
    <property type="entry name" value="CYP503A1-like"/>
    <property type="match status" value="1"/>
</dbReference>
<dbReference type="Gene3D" id="1.10.630.10">
    <property type="entry name" value="Cytochrome P450"/>
    <property type="match status" value="1"/>
</dbReference>
<dbReference type="InterPro" id="IPR001128">
    <property type="entry name" value="Cyt_P450"/>
</dbReference>
<dbReference type="InterPro" id="IPR002401">
    <property type="entry name" value="Cyt_P450_E_grp-I"/>
</dbReference>
<dbReference type="InterPro" id="IPR036396">
    <property type="entry name" value="Cyt_P450_sf"/>
</dbReference>
<dbReference type="PANTHER" id="PTHR46206">
    <property type="entry name" value="CYTOCHROME P450"/>
    <property type="match status" value="1"/>
</dbReference>
<dbReference type="PANTHER" id="PTHR46206:SF6">
    <property type="entry name" value="CYTOCHROME P450 MONOOXYGENASE AN1598-RELATED"/>
    <property type="match status" value="1"/>
</dbReference>
<dbReference type="Pfam" id="PF00067">
    <property type="entry name" value="p450"/>
    <property type="match status" value="1"/>
</dbReference>
<dbReference type="PRINTS" id="PR00463">
    <property type="entry name" value="EP450I"/>
</dbReference>
<dbReference type="SUPFAM" id="SSF48264">
    <property type="entry name" value="Cytochrome P450"/>
    <property type="match status" value="1"/>
</dbReference>
<sequence>MFLSIKRKIIEPYLVIRQSLAPLKLSRWQLTKIMARTAFDGLPSGTLIVLAALSLALLVAVLRIKSQERTRSKEIPGLPVVKRNHLHYLDIVREGRELYPGQPFMAVNKRHSLVVFPPSCFNEIKRLPAHTASAKKFFNTTNYGDWSHVGEESPELIKSVIADLTRSLPARVHTRQDECRDVFDEVVGRRREWKEFPLLMTTFEIITQINACSFVGKTLATNRSWVRSVMMLPVFIHVGVMLLDACPLIVRPFMAYLTFLPSIKNRWDLTRMLAPVLKKDLEEYHEAKDKKEFLRPRAEGKVPFTGFLLSHYKSAQASLKQLISDYIHLSFDSTPNTAAVMFHALCELAIHPEAVEALRQELDEVMVDGKLPPTHLQELRKMDSFLRECFRLHPFGIFTLQRRVEQPVQLSVGPLLPPGTLMAVDGQAIDGSSELWPNPEKFDVYRFYNLRQKLGNENQYHFATTSPDSPGWGDGTQACPGRFFAVNTLKIAMAHFLRNYDIEIKPECLPLKTKPMPSGFFSPDDRAIARIRART</sequence>
<comment type="function">
    <text evidence="4 5 9">Cytochrome P450 monooxygenase; part of the gene cluster that mediates the biosynthesis of the mycotoxin pyrichalasin H, a tyrosine-derived cytochalasan that inhibits the growth of rice seedlings, but also inhibits lymphocyte capping and actin polymerization and alters cell morphology (Probable) (PubMed:31099577). Pyrichalasin H is indicated as the responsible agent for the genus-specific pathogenicity of M.grisea toward crabgrass (PubMed:31099577). The first step in the pathway is catalyzed by the O-methyltransferase pyiA which methylates free tyrosine to generate the precursor O-methyltyrosine (PubMed:31099577). The hybrid PKS-NRPS pyiS, assisted by the enoyl reductase pyiC, are responsible for fusion of the O-methyltyrosine precursor and the polyketide backbone (PubMed:31099577). The polyketide synthase module (PKS) of pyiS is responsible for the synthesis of the polyketide backbone and the downstream nonribosomal peptide synthetase (NRPS) amidates the carboxyl end of the polyketide with the O-methyltyrosine precursor (PubMed:31099577). As the NRPS A-domain demonstrates substrate tolerance, pyiS can also use phenylalanine, tyrosine and even para-chlorophenylalanine as amino acid precursor, which leads to the production of novel cytochalasans, including halogenated cytochalasans (PubMed:31099577). Because pyiS lacks a designated enoylreductase (ER) domain, the required activity is provided the enoyl reductase pyiC (PubMed:31099577). Reduction by the hydrolyase pyiE leads to 1,5-dihydropyrrolone, which is substrate for dehydration and intra-molecular Diels-Alder cyclization by the Diels-Alderase pyiF to yield the required isoindolone-fused macrocycle (PubMed:32039410). The tailoring cytochrome P450 monooxygenases piyD and piyG catalyze the hydroxylation at C-18 and C-7, respectivily, whereas the short-chain dehydrogenase/reductase pyiH reduces the carbonyl at C-21 in preparation for the transfer of an acetyl group by the acetyltransferase pyiB (PubMed:31099577). These 3 reactions whose order is not clear yet, lead to the production of O-methylpyrichalasin J, a deacetylated pyrichalasin H (PubMed:31099577). Finally, pyiB to converts O-methylpyrichalasin J into the final product pyrichalasin H via acetylation of C-21 (PubMed:31099577).</text>
</comment>
<comment type="cofactor">
    <cofactor evidence="1">
        <name>heme</name>
        <dbReference type="ChEBI" id="CHEBI:30413"/>
    </cofactor>
</comment>
<comment type="pathway">
    <text evidence="8">Mycotoxin biosynthesis.</text>
</comment>
<comment type="subcellular location">
    <subcellularLocation>
        <location evidence="2">Membrane</location>
        <topology evidence="2">Single-pass membrane protein</topology>
    </subcellularLocation>
</comment>
<comment type="disruption phenotype">
    <text evidence="4">Leads to the loss of pyrichalasin H production, but accumulates novel cytochalasans, all lacking a hydroxyl group at C-18.</text>
</comment>
<comment type="similarity">
    <text evidence="7">Belongs to the cytochrome P450 family.</text>
</comment>
<keyword id="KW-0325">Glycoprotein</keyword>
<keyword id="KW-0349">Heme</keyword>
<keyword id="KW-0408">Iron</keyword>
<keyword id="KW-0472">Membrane</keyword>
<keyword id="KW-0479">Metal-binding</keyword>
<keyword id="KW-0503">Monooxygenase</keyword>
<keyword id="KW-0560">Oxidoreductase</keyword>
<keyword id="KW-1185">Reference proteome</keyword>
<keyword id="KW-0812">Transmembrane</keyword>
<keyword id="KW-1133">Transmembrane helix</keyword>
<reference key="1">
    <citation type="journal article" date="2019" name="Org. Lett.">
        <title>Targeted gene inactivations expose silent cytochalasans in Magnaporthe grisea NI980.</title>
        <authorList>
            <person name="Wang C."/>
            <person name="Hantke V."/>
            <person name="Cox R.J."/>
            <person name="Skellam E."/>
        </authorList>
    </citation>
    <scope>NUCLEOTIDE SEQUENCE [GENOMIC DNA]</scope>
    <scope>FUNCTION</scope>
    <scope>DISRUPTION PHENOTYPE</scope>
    <scope>PATHWAY</scope>
    <source>
        <strain>NI980</strain>
    </source>
</reference>
<reference key="2">
    <citation type="journal article" date="2019" name="Org. Lett.">
        <title>Investigating the function of cryptic cytochalasan cytochrome P450 monooxygenases using combinatorial biosynthesis.</title>
        <authorList>
            <person name="Wang C."/>
            <person name="Becker K."/>
            <person name="Pfuetze S."/>
            <person name="Kuhnert E."/>
            <person name="Stadler M."/>
            <person name="Cox R.J."/>
            <person name="Skellam E."/>
        </authorList>
    </citation>
    <scope>FUNCTION</scope>
</reference>
<reference key="3">
    <citation type="journal article" date="2020" name="Chem. Commun. (Camb.)">
        <title>Evidence for enzyme catalysed intramolecular [4+2] Diels-Alder cyclization during the biosynthesis of pyrichalasin H.</title>
        <authorList>
            <person name="Hantke V."/>
            <person name="Skellam E.J."/>
            <person name="Cox R.J."/>
        </authorList>
    </citation>
    <scope>FUNCTION</scope>
</reference>
<proteinExistence type="inferred from homology"/>
<protein>
    <recommendedName>
        <fullName evidence="6">Pyrichalasin C-18 hydroxylase</fullName>
        <ecNumber evidence="8">1.-.-.-</ecNumber>
    </recommendedName>
    <alternativeName>
        <fullName evidence="6">Cytochrome P450 monooxygenase pyiD</fullName>
    </alternativeName>
    <alternativeName>
        <fullName evidence="6">Pyrichalasin H biosynthesis cluster protein D</fullName>
    </alternativeName>
</protein>
<feature type="chain" id="PRO_0000449434" description="Pyrichalasin C-18 hydroxylase">
    <location>
        <begin position="1"/>
        <end position="535"/>
    </location>
</feature>
<feature type="transmembrane region" description="Helical" evidence="2">
    <location>
        <begin position="42"/>
        <end position="62"/>
    </location>
</feature>
<feature type="binding site" description="axial binding residue" evidence="1">
    <location>
        <position position="479"/>
    </location>
    <ligand>
        <name>heme</name>
        <dbReference type="ChEBI" id="CHEBI:30413"/>
    </ligand>
    <ligandPart>
        <name>Fe</name>
        <dbReference type="ChEBI" id="CHEBI:18248"/>
    </ligandPart>
</feature>
<feature type="glycosylation site" description="N-linked (GlcNAc...) asparagine" evidence="3">
    <location>
        <position position="139"/>
    </location>
</feature>
<feature type="glycosylation site" description="N-linked (GlcNAc...) asparagine" evidence="3">
    <location>
        <position position="222"/>
    </location>
</feature>
<accession>A0A4P8W744</accession>
<organism>
    <name type="scientific">Pyricularia grisea</name>
    <name type="common">Crabgrass-specific blast fungus</name>
    <name type="synonym">Magnaporthe grisea</name>
    <dbReference type="NCBI Taxonomy" id="148305"/>
    <lineage>
        <taxon>Eukaryota</taxon>
        <taxon>Fungi</taxon>
        <taxon>Dikarya</taxon>
        <taxon>Ascomycota</taxon>
        <taxon>Pezizomycotina</taxon>
        <taxon>Sordariomycetes</taxon>
        <taxon>Sordariomycetidae</taxon>
        <taxon>Magnaporthales</taxon>
        <taxon>Pyriculariaceae</taxon>
        <taxon>Pyricularia</taxon>
    </lineage>
</organism>
<gene>
    <name evidence="6" type="primary">pyiD</name>
</gene>